<dbReference type="EC" id="6.1.1.6"/>
<dbReference type="EC" id="2.3.2.3"/>
<dbReference type="EMBL" id="CP000518">
    <property type="protein sequence ID" value="ABL92221.1"/>
    <property type="molecule type" value="Genomic_DNA"/>
</dbReference>
<dbReference type="SMR" id="A1UHB3"/>
<dbReference type="STRING" id="189918.Mkms_3027"/>
<dbReference type="KEGG" id="mkm:Mkms_3027"/>
<dbReference type="HOGENOM" id="CLU_008255_2_0_11"/>
<dbReference type="OrthoDB" id="9801152at2"/>
<dbReference type="GO" id="GO:0005829">
    <property type="term" value="C:cytosol"/>
    <property type="evidence" value="ECO:0007669"/>
    <property type="project" value="TreeGrafter"/>
</dbReference>
<dbReference type="GO" id="GO:0005886">
    <property type="term" value="C:plasma membrane"/>
    <property type="evidence" value="ECO:0007669"/>
    <property type="project" value="UniProtKB-SubCell"/>
</dbReference>
<dbReference type="GO" id="GO:0005524">
    <property type="term" value="F:ATP binding"/>
    <property type="evidence" value="ECO:0007669"/>
    <property type="project" value="UniProtKB-UniRule"/>
</dbReference>
<dbReference type="GO" id="GO:0003677">
    <property type="term" value="F:DNA binding"/>
    <property type="evidence" value="ECO:0007669"/>
    <property type="project" value="UniProtKB-KW"/>
</dbReference>
<dbReference type="GO" id="GO:0004824">
    <property type="term" value="F:lysine-tRNA ligase activity"/>
    <property type="evidence" value="ECO:0007669"/>
    <property type="project" value="UniProtKB-UniRule"/>
</dbReference>
<dbReference type="GO" id="GO:0000287">
    <property type="term" value="F:magnesium ion binding"/>
    <property type="evidence" value="ECO:0007669"/>
    <property type="project" value="UniProtKB-UniRule"/>
</dbReference>
<dbReference type="GO" id="GO:0050071">
    <property type="term" value="F:phosphatidylglycerol lysyltransferase activity"/>
    <property type="evidence" value="ECO:0007669"/>
    <property type="project" value="UniProtKB-EC"/>
</dbReference>
<dbReference type="GO" id="GO:0000049">
    <property type="term" value="F:tRNA binding"/>
    <property type="evidence" value="ECO:0007669"/>
    <property type="project" value="TreeGrafter"/>
</dbReference>
<dbReference type="GO" id="GO:0006629">
    <property type="term" value="P:lipid metabolic process"/>
    <property type="evidence" value="ECO:0007669"/>
    <property type="project" value="UniProtKB-KW"/>
</dbReference>
<dbReference type="GO" id="GO:0006430">
    <property type="term" value="P:lysyl-tRNA aminoacylation"/>
    <property type="evidence" value="ECO:0007669"/>
    <property type="project" value="UniProtKB-UniRule"/>
</dbReference>
<dbReference type="GO" id="GO:0046677">
    <property type="term" value="P:response to antibiotic"/>
    <property type="evidence" value="ECO:0007669"/>
    <property type="project" value="UniProtKB-KW"/>
</dbReference>
<dbReference type="CDD" id="cd04322">
    <property type="entry name" value="LysRS_N"/>
    <property type="match status" value="1"/>
</dbReference>
<dbReference type="Gene3D" id="3.30.930.10">
    <property type="entry name" value="Bira Bifunctional Protein, Domain 2"/>
    <property type="match status" value="1"/>
</dbReference>
<dbReference type="Gene3D" id="2.40.50.140">
    <property type="entry name" value="Nucleic acid-binding proteins"/>
    <property type="match status" value="1"/>
</dbReference>
<dbReference type="HAMAP" id="MF_00252">
    <property type="entry name" value="Lys_tRNA_synth_class2"/>
    <property type="match status" value="1"/>
</dbReference>
<dbReference type="InterPro" id="IPR004364">
    <property type="entry name" value="Aa-tRNA-synt_II"/>
</dbReference>
<dbReference type="InterPro" id="IPR006195">
    <property type="entry name" value="aa-tRNA-synth_II"/>
</dbReference>
<dbReference type="InterPro" id="IPR045864">
    <property type="entry name" value="aa-tRNA-synth_II/BPL/LPL"/>
</dbReference>
<dbReference type="InterPro" id="IPR024320">
    <property type="entry name" value="LPG_synthase_C"/>
</dbReference>
<dbReference type="InterPro" id="IPR002313">
    <property type="entry name" value="Lys-tRNA-ligase_II"/>
</dbReference>
<dbReference type="InterPro" id="IPR044136">
    <property type="entry name" value="Lys-tRNA-ligase_II_N"/>
</dbReference>
<dbReference type="InterPro" id="IPR018149">
    <property type="entry name" value="Lys-tRNA-synth_II_C"/>
</dbReference>
<dbReference type="InterPro" id="IPR012340">
    <property type="entry name" value="NA-bd_OB-fold"/>
</dbReference>
<dbReference type="InterPro" id="IPR004365">
    <property type="entry name" value="NA-bd_OB_tRNA"/>
</dbReference>
<dbReference type="InterPro" id="IPR031553">
    <property type="entry name" value="tRNA-synt_2_TM"/>
</dbReference>
<dbReference type="NCBIfam" id="TIGR00499">
    <property type="entry name" value="lysS_bact"/>
    <property type="match status" value="1"/>
</dbReference>
<dbReference type="NCBIfam" id="NF001756">
    <property type="entry name" value="PRK00484.1"/>
    <property type="match status" value="1"/>
</dbReference>
<dbReference type="NCBIfam" id="NF002821">
    <property type="entry name" value="PRK02983.1"/>
    <property type="match status" value="1"/>
</dbReference>
<dbReference type="PANTHER" id="PTHR42918:SF15">
    <property type="entry name" value="LYSINE--TRNA LIGASE, CHLOROPLASTIC_MITOCHONDRIAL"/>
    <property type="match status" value="1"/>
</dbReference>
<dbReference type="PANTHER" id="PTHR42918">
    <property type="entry name" value="LYSYL-TRNA SYNTHETASE"/>
    <property type="match status" value="1"/>
</dbReference>
<dbReference type="Pfam" id="PF09924">
    <property type="entry name" value="LPG_synthase_C"/>
    <property type="match status" value="1"/>
</dbReference>
<dbReference type="Pfam" id="PF00152">
    <property type="entry name" value="tRNA-synt_2"/>
    <property type="match status" value="1"/>
</dbReference>
<dbReference type="Pfam" id="PF16995">
    <property type="entry name" value="tRNA-synt_2_TM"/>
    <property type="match status" value="1"/>
</dbReference>
<dbReference type="Pfam" id="PF01336">
    <property type="entry name" value="tRNA_anti-codon"/>
    <property type="match status" value="1"/>
</dbReference>
<dbReference type="PRINTS" id="PR00982">
    <property type="entry name" value="TRNASYNTHLYS"/>
</dbReference>
<dbReference type="SUPFAM" id="SSF55681">
    <property type="entry name" value="Class II aaRS and biotin synthetases"/>
    <property type="match status" value="1"/>
</dbReference>
<dbReference type="SUPFAM" id="SSF50249">
    <property type="entry name" value="Nucleic acid-binding proteins"/>
    <property type="match status" value="1"/>
</dbReference>
<dbReference type="PROSITE" id="PS50862">
    <property type="entry name" value="AA_TRNA_LIGASE_II"/>
    <property type="match status" value="1"/>
</dbReference>
<sequence length="1112" mass="121837">MTLTSPPRTRADSRYSWVPAAAGWTVGVIATLSLIASVSPLVRWIIRVPREFVDDYIFNFPDTSFAWAFVLALLAGALAARKRIAWWILLLYMVAAAGWNVADLLTGDESVVDEMGEVIGLAFHLAAVAFLLLARPLFWARVRRGALFKAAGVLAAGMAVGVLVGWGLLELFPGDLERDYRLAYAANRVFAFAGVDPDAFDGQHPHVVVNALLGLFGALALMAAAIVLFQSQRSENALTGEDESAIRGLLELYGKNDSLGYFATRRDKSVVFAPNGRAAITYRVEVGVCLASGDPVGDPKAWPQAIDAWLALCGTYGWAPGVMGASVGGAEAFRAAGLSAIQLGDEAILLPDSFRLSGPDMRAVRQAVTRARRAGVTVRIRRHRELSPEQMAEVIAHADAWRDTETERGFSMALGRLGDPADSDCLLVEAVQGGNGGQERSDPGDGTVVAMLSLVPWGSNGASLDVMRRSPQSPNGTIELMVSELCMQAEDIGVTRISLNFAMFRSAFEQGAQLGAGPVARLWRWLLVFFSRWWQLETLYRSNMKYQPQWVPRYACYEDARLIPRVGVASVIAEGFLVLPFSRRNKQHTGHHTSAPQDLVASGVLHHDGTAPDMSGLRTDTADDEPPRLPEQVRVRMAKLKALQADGVDAYPVGRPPSHTAAAAVDSPDDVELDVAGRVLRIRDYGGVLFAQLRDWSGEVQLLLDNSTLEQGSTADFTAAIDLGDLIAATGTMGYSKNGTRSLLVRHWRLTGKCLRPLPDKWKGLTDQEARVRARYVDLAVNTEARDLIRARSGVLHAIRDTLYHKGFLEVETPILQQIHGGANARPFLTHINAYDLDLYLRIAPELYLKRLCVGGVERVFELGRAFRNEGVDFSHNPEFTLLEAYQAHADYHVWIDGCRELIQNAAMAANGEHVFLRPRDDGVLEPVDISGPWTVKTVHEAVSEALGEHIDAATELPTLRKLADAAGIPYLTHWDEGAVVLEMYEHLVEDRTQKPTFYKDFPTSVSPLTRPHRSIAGVAERWDLVAWGVELGTAYSELTDPVEQRRRLQAQSLLAAGGDPEAMELDEDFLQAMEYAMPPTGGLGMGVDRVVMLITGRSIRETLPFPLARPR</sequence>
<keyword id="KW-0030">Aminoacyl-tRNA synthetase</keyword>
<keyword id="KW-0046">Antibiotic resistance</keyword>
<keyword id="KW-0067">ATP-binding</keyword>
<keyword id="KW-1003">Cell membrane</keyword>
<keyword id="KW-0238">DNA-binding</keyword>
<keyword id="KW-0436">Ligase</keyword>
<keyword id="KW-0443">Lipid metabolism</keyword>
<keyword id="KW-0460">Magnesium</keyword>
<keyword id="KW-0472">Membrane</keyword>
<keyword id="KW-0479">Metal-binding</keyword>
<keyword id="KW-0511">Multifunctional enzyme</keyword>
<keyword id="KW-0547">Nucleotide-binding</keyword>
<keyword id="KW-0808">Transferase</keyword>
<keyword id="KW-0812">Transmembrane</keyword>
<keyword id="KW-1133">Transmembrane helix</keyword>
<protein>
    <recommendedName>
        <fullName>Lysylphosphatidylglycerol biosynthesis bifunctional protein LysX</fullName>
    </recommendedName>
    <domain>
        <recommendedName>
            <fullName>Lysine--tRNA ligase</fullName>
            <ecNumber>6.1.1.6</ecNumber>
        </recommendedName>
        <alternativeName>
            <fullName>Lysyl-tRNA synthetase</fullName>
            <shortName>LysRS</shortName>
        </alternativeName>
    </domain>
    <domain>
        <recommendedName>
            <fullName>Phosphatidylglycerol lysyltransferase</fullName>
            <ecNumber>2.3.2.3</ecNumber>
        </recommendedName>
        <alternativeName>
            <fullName>Lysylphosphatidylglycerol synthetase</fullName>
            <shortName>LPG synthetase</shortName>
        </alternativeName>
    </domain>
</protein>
<feature type="chain" id="PRO_0000394326" description="Lysylphosphatidylglycerol biosynthesis bifunctional protein LysX">
    <location>
        <begin position="1"/>
        <end position="1112"/>
    </location>
</feature>
<feature type="transmembrane region" description="Helical" evidence="2">
    <location>
        <begin position="18"/>
        <end position="38"/>
    </location>
</feature>
<feature type="transmembrane region" description="Helical" evidence="2">
    <location>
        <begin position="60"/>
        <end position="80"/>
    </location>
</feature>
<feature type="transmembrane region" description="Helical" evidence="2">
    <location>
        <begin position="84"/>
        <end position="104"/>
    </location>
</feature>
<feature type="transmembrane region" description="Helical" evidence="2">
    <location>
        <begin position="118"/>
        <end position="138"/>
    </location>
</feature>
<feature type="transmembrane region" description="Helical" evidence="2">
    <location>
        <begin position="152"/>
        <end position="172"/>
    </location>
</feature>
<feature type="transmembrane region" description="Helical" evidence="2">
    <location>
        <begin position="209"/>
        <end position="229"/>
    </location>
</feature>
<feature type="transmembrane region" description="Helical" evidence="2">
    <location>
        <begin position="308"/>
        <end position="328"/>
    </location>
</feature>
<feature type="DNA-binding region" description="OB">
    <location>
        <begin position="675"/>
        <end position="748"/>
    </location>
</feature>
<feature type="region of interest" description="Phosphatidylglycerol lysyltransferase">
    <location>
        <begin position="1"/>
        <end position="613"/>
    </location>
</feature>
<feature type="region of interest" description="Lysine--tRNA ligase">
    <location>
        <begin position="614"/>
        <end position="1112"/>
    </location>
</feature>
<feature type="binding site" evidence="1">
    <location>
        <position position="1024"/>
    </location>
    <ligand>
        <name>Mg(2+)</name>
        <dbReference type="ChEBI" id="CHEBI:18420"/>
        <label>1</label>
    </ligand>
</feature>
<feature type="binding site" evidence="1">
    <location>
        <position position="1031"/>
    </location>
    <ligand>
        <name>Mg(2+)</name>
        <dbReference type="ChEBI" id="CHEBI:18420"/>
        <label>1</label>
    </ligand>
</feature>
<feature type="binding site" evidence="1">
    <location>
        <position position="1031"/>
    </location>
    <ligand>
        <name>Mg(2+)</name>
        <dbReference type="ChEBI" id="CHEBI:18420"/>
        <label>2</label>
    </ligand>
</feature>
<evidence type="ECO:0000250" key="1"/>
<evidence type="ECO:0000255" key="2"/>
<evidence type="ECO:0000305" key="3"/>
<proteinExistence type="inferred from homology"/>
<accession>A1UHB3</accession>
<comment type="function">
    <text evidence="1">Catalyzes the production of L-lysyl-tRNA(Lys)transfer and the transfer of a lysyl group from L-lysyl-tRNA(Lys) to membrane-bound phosphatidylglycerol (PG), which produces lysylphosphatidylglycerol (LPG), one of the components of the bacterial membrane with a positive net charge. LPG synthesis contributes to the resistance to cationic antimicrobial peptides (CAMPs) and likely protects M.tuberculosis against the CAMPs produced by competiting microorganisms (bacteriocins). In fact, the modification of anionic phosphatidylglycerol with positively charged L-lysine results in repulsion of the peptides (By similarity).</text>
</comment>
<comment type="catalytic activity">
    <reaction>
        <text>tRNA(Lys) + L-lysine + ATP = L-lysyl-tRNA(Lys) + AMP + diphosphate</text>
        <dbReference type="Rhea" id="RHEA:20792"/>
        <dbReference type="Rhea" id="RHEA-COMP:9696"/>
        <dbReference type="Rhea" id="RHEA-COMP:9697"/>
        <dbReference type="ChEBI" id="CHEBI:30616"/>
        <dbReference type="ChEBI" id="CHEBI:32551"/>
        <dbReference type="ChEBI" id="CHEBI:33019"/>
        <dbReference type="ChEBI" id="CHEBI:78442"/>
        <dbReference type="ChEBI" id="CHEBI:78529"/>
        <dbReference type="ChEBI" id="CHEBI:456215"/>
        <dbReference type="EC" id="6.1.1.6"/>
    </reaction>
</comment>
<comment type="catalytic activity">
    <reaction>
        <text>L-lysyl-tRNA(Lys) + a 1,2-diacyl-sn-glycero-3-phospho-(1'-sn-glycerol) = a 1,2-diacyl-sn-glycero-3-phospho-1'-(3'-O-L-lysyl)-sn-glycerol + tRNA(Lys)</text>
        <dbReference type="Rhea" id="RHEA:10668"/>
        <dbReference type="Rhea" id="RHEA-COMP:9696"/>
        <dbReference type="Rhea" id="RHEA-COMP:9697"/>
        <dbReference type="ChEBI" id="CHEBI:64716"/>
        <dbReference type="ChEBI" id="CHEBI:75792"/>
        <dbReference type="ChEBI" id="CHEBI:78442"/>
        <dbReference type="ChEBI" id="CHEBI:78529"/>
        <dbReference type="EC" id="2.3.2.3"/>
    </reaction>
</comment>
<comment type="cofactor">
    <cofactor evidence="1">
        <name>Mg(2+)</name>
        <dbReference type="ChEBI" id="CHEBI:18420"/>
    </cofactor>
    <text evidence="1">Binds 3 Mg(2+) ions per subunit.</text>
</comment>
<comment type="subcellular location">
    <subcellularLocation>
        <location evidence="3">Cell membrane</location>
        <topology evidence="3">Multi-pass membrane protein</topology>
    </subcellularLocation>
</comment>
<comment type="similarity">
    <text evidence="3">In the N-terminal section; belongs to the LPG synthetase family.</text>
</comment>
<comment type="similarity">
    <text evidence="3">In the C-terminal section; belongs to the class-II aminoacyl-tRNA synthetase family.</text>
</comment>
<reference key="1">
    <citation type="submission" date="2006-12" db="EMBL/GenBank/DDBJ databases">
        <title>Complete sequence of chromosome of Mycobacterium sp. KMS.</title>
        <authorList>
            <consortium name="US DOE Joint Genome Institute"/>
            <person name="Copeland A."/>
            <person name="Lucas S."/>
            <person name="Lapidus A."/>
            <person name="Barry K."/>
            <person name="Detter J.C."/>
            <person name="Glavina del Rio T."/>
            <person name="Hammon N."/>
            <person name="Israni S."/>
            <person name="Dalin E."/>
            <person name="Tice H."/>
            <person name="Pitluck S."/>
            <person name="Kiss H."/>
            <person name="Brettin T."/>
            <person name="Bruce D."/>
            <person name="Han C."/>
            <person name="Tapia R."/>
            <person name="Gilna P."/>
            <person name="Schmutz J."/>
            <person name="Larimer F."/>
            <person name="Land M."/>
            <person name="Hauser L."/>
            <person name="Kyrpides N."/>
            <person name="Mikhailova N."/>
            <person name="Miller C.D."/>
            <person name="Richardson P."/>
        </authorList>
    </citation>
    <scope>NUCLEOTIDE SEQUENCE [LARGE SCALE GENOMIC DNA]</scope>
    <source>
        <strain>KMS</strain>
    </source>
</reference>
<organism>
    <name type="scientific">Mycobacterium sp. (strain KMS)</name>
    <dbReference type="NCBI Taxonomy" id="189918"/>
    <lineage>
        <taxon>Bacteria</taxon>
        <taxon>Bacillati</taxon>
        <taxon>Actinomycetota</taxon>
        <taxon>Actinomycetes</taxon>
        <taxon>Mycobacteriales</taxon>
        <taxon>Mycobacteriaceae</taxon>
        <taxon>Mycobacterium</taxon>
    </lineage>
</organism>
<name>LYSX_MYCSK</name>
<gene>
    <name type="primary">lysX</name>
    <name type="ordered locus">Mkms_3027</name>
</gene>